<evidence type="ECO:0000250" key="1"/>
<evidence type="ECO:0000269" key="2">
    <source>
    </source>
</evidence>
<evidence type="ECO:0000305" key="3"/>
<keyword id="KW-0975">Bacterial flagellum</keyword>
<keyword id="KW-1185">Reference proteome</keyword>
<keyword id="KW-0964">Secreted</keyword>
<accession>P56963</accession>
<accession>Q0P8S0</accession>
<accession>Q9PMW0</accession>
<dbReference type="EMBL" id="AL111168">
    <property type="protein sequence ID" value="CAL35451.1"/>
    <property type="molecule type" value="Genomic_DNA"/>
</dbReference>
<dbReference type="PIR" id="H81277">
    <property type="entry name" value="H81277"/>
</dbReference>
<dbReference type="RefSeq" id="WP_010891927.1">
    <property type="nucleotide sequence ID" value="NC_002163.1"/>
</dbReference>
<dbReference type="RefSeq" id="YP_002344727.1">
    <property type="nucleotide sequence ID" value="NC_002163.1"/>
</dbReference>
<dbReference type="SMR" id="P56963"/>
<dbReference type="IntAct" id="P56963">
    <property type="interactions" value="5"/>
</dbReference>
<dbReference type="STRING" id="192222.Cj1339c"/>
<dbReference type="PaxDb" id="192222-Cj1339c"/>
<dbReference type="EnsemblBacteria" id="CAL35451">
    <property type="protein sequence ID" value="CAL35451"/>
    <property type="gene ID" value="Cj1339c"/>
</dbReference>
<dbReference type="GeneID" id="905631"/>
<dbReference type="KEGG" id="cje:Cj1339c"/>
<dbReference type="PATRIC" id="fig|192222.6.peg.1321"/>
<dbReference type="eggNOG" id="COG1344">
    <property type="taxonomic scope" value="Bacteria"/>
</dbReference>
<dbReference type="HOGENOM" id="CLU_011142_7_1_7"/>
<dbReference type="OrthoDB" id="9796789at2"/>
<dbReference type="Proteomes" id="UP000000799">
    <property type="component" value="Chromosome"/>
</dbReference>
<dbReference type="GO" id="GO:0009288">
    <property type="term" value="C:bacterial-type flagellum"/>
    <property type="evidence" value="ECO:0007669"/>
    <property type="project" value="UniProtKB-SubCell"/>
</dbReference>
<dbReference type="GO" id="GO:0005576">
    <property type="term" value="C:extracellular region"/>
    <property type="evidence" value="ECO:0007669"/>
    <property type="project" value="UniProtKB-SubCell"/>
</dbReference>
<dbReference type="GO" id="GO:0005198">
    <property type="term" value="F:structural molecule activity"/>
    <property type="evidence" value="ECO:0007669"/>
    <property type="project" value="InterPro"/>
</dbReference>
<dbReference type="Gene3D" id="3.30.70.2120">
    <property type="match status" value="1"/>
</dbReference>
<dbReference type="Gene3D" id="1.20.1330.10">
    <property type="entry name" value="f41 fragment of flagellin, N-terminal domain"/>
    <property type="match status" value="1"/>
</dbReference>
<dbReference type="Gene3D" id="6.10.10.10">
    <property type="entry name" value="Flagellar export chaperone, C-terminal domain"/>
    <property type="match status" value="1"/>
</dbReference>
<dbReference type="InterPro" id="IPR001492">
    <property type="entry name" value="Flagellin"/>
</dbReference>
<dbReference type="InterPro" id="IPR046358">
    <property type="entry name" value="Flagellin_C"/>
</dbReference>
<dbReference type="InterPro" id="IPR042187">
    <property type="entry name" value="Flagellin_C_sub2"/>
</dbReference>
<dbReference type="InterPro" id="IPR010810">
    <property type="entry name" value="Flagellin_hook_IN_motif"/>
</dbReference>
<dbReference type="InterPro" id="IPR001029">
    <property type="entry name" value="Flagellin_N"/>
</dbReference>
<dbReference type="NCBIfam" id="NF006264">
    <property type="entry name" value="PRK08411.1"/>
    <property type="match status" value="1"/>
</dbReference>
<dbReference type="NCBIfam" id="NF010116">
    <property type="entry name" value="PRK13589.1"/>
    <property type="match status" value="1"/>
</dbReference>
<dbReference type="PANTHER" id="PTHR42792">
    <property type="entry name" value="FLAGELLIN"/>
    <property type="match status" value="1"/>
</dbReference>
<dbReference type="PANTHER" id="PTHR42792:SF2">
    <property type="entry name" value="FLAGELLIN"/>
    <property type="match status" value="1"/>
</dbReference>
<dbReference type="Pfam" id="PF00700">
    <property type="entry name" value="Flagellin_C"/>
    <property type="match status" value="1"/>
</dbReference>
<dbReference type="Pfam" id="PF07196">
    <property type="entry name" value="Flagellin_IN"/>
    <property type="match status" value="2"/>
</dbReference>
<dbReference type="Pfam" id="PF00669">
    <property type="entry name" value="Flagellin_N"/>
    <property type="match status" value="1"/>
</dbReference>
<dbReference type="PRINTS" id="PR00207">
    <property type="entry name" value="FLAGELLIN"/>
</dbReference>
<dbReference type="SUPFAM" id="SSF64518">
    <property type="entry name" value="Phase 1 flagellin"/>
    <property type="match status" value="1"/>
</dbReference>
<reference key="1">
    <citation type="journal article" date="2000" name="Nature">
        <title>The genome sequence of the food-borne pathogen Campylobacter jejuni reveals hypervariable sequences.</title>
        <authorList>
            <person name="Parkhill J."/>
            <person name="Wren B.W."/>
            <person name="Mungall K.L."/>
            <person name="Ketley J.M."/>
            <person name="Churcher C.M."/>
            <person name="Basham D."/>
            <person name="Chillingworth T."/>
            <person name="Davies R.M."/>
            <person name="Feltwell T."/>
            <person name="Holroyd S."/>
            <person name="Jagels K."/>
            <person name="Karlyshev A.V."/>
            <person name="Moule S."/>
            <person name="Pallen M.J."/>
            <person name="Penn C.W."/>
            <person name="Quail M.A."/>
            <person name="Rajandream M.A."/>
            <person name="Rutherford K.M."/>
            <person name="van Vliet A.H.M."/>
            <person name="Whitehead S."/>
            <person name="Barrell B.G."/>
        </authorList>
    </citation>
    <scope>NUCLEOTIDE SEQUENCE [LARGE SCALE GENOMIC DNA]</scope>
    <source>
        <strain>ATCC 700819 / NCTC 11168</strain>
    </source>
</reference>
<reference key="2">
    <citation type="journal article" date="2016" name="Nat. Commun.">
        <title>The CsrA-FliW network controls polar localization of the dual-function flagellin mRNA in Campylobacter jejuni.</title>
        <authorList>
            <person name="Dugar G."/>
            <person name="Svensson S.L."/>
            <person name="Bischler T."/>
            <person name="Waeldchen S."/>
            <person name="Reinhardt R."/>
            <person name="Sauer M."/>
            <person name="Sharma C.M."/>
        </authorList>
    </citation>
    <scope>INTERACTION WITH FLIW</scope>
    <scope>DISRUPTION PHENOTYPE</scope>
    <source>
        <strain>ATCC 700819 / NCTC 11168</strain>
    </source>
</reference>
<sequence>MGFRINTNVAALNAKANADLNSKSLDASLSRLSSGLRINSAADDASGMAIADSLRSQANTLGQAISNGNDALGILQTADKAMDEQLKILDTIKTKATQAAQDGQSLKTRTMLQADINRLMEELDNIANTTSFNGKQLLSGNFINQEFQIGASSNQTVKATIGATQSSKIGLTRFETGGRISTSGEVQFTLKNYNGIDDFQFQKVVISTSVGTGLGALADEINKNADKTGVRATFTVETRGIAAVRAGATSDTFAINGVKIGKVDYKDGDANGALVAAINSVKDTTGVEASIDANGQLLLTSREGRGIKIDGNIGGGAFINADMKENYGRLSLVKNDGKDILISGSNLSSAGFGATQFISQASVSLRESKGQIDANIADAMGFGSANKGVVLGGYSSVSAYMSSAGSGFSSGSGYSVGSGKNYSTGFANAIAISAASQLSTVYNVSAGSGFSSGSTLSQFATMKTTAFGVKDETAGVTTLKGAMAVMDIAETAITNLDQIRADIGSVQNQVTSTINNITVTQVNVKAAESQIRDVDFAAESANYSKANILAQSGSYAMAQANSVQQNVLRLLQ</sequence>
<organism>
    <name type="scientific">Campylobacter jejuni subsp. jejuni serotype O:2 (strain ATCC 700819 / NCTC 11168)</name>
    <dbReference type="NCBI Taxonomy" id="192222"/>
    <lineage>
        <taxon>Bacteria</taxon>
        <taxon>Pseudomonadati</taxon>
        <taxon>Campylobacterota</taxon>
        <taxon>Epsilonproteobacteria</taxon>
        <taxon>Campylobacterales</taxon>
        <taxon>Campylobacteraceae</taxon>
        <taxon>Campylobacter</taxon>
    </lineage>
</organism>
<proteinExistence type="evidence at protein level"/>
<gene>
    <name type="primary">flaA</name>
    <name type="ordered locus">Cj1339c</name>
</gene>
<comment type="function">
    <text evidence="2">Flagellin is the subunit protein which polymerizes to form the filaments of bacterial flagella. FlaA binds to flagellar assembly factor FliW protein, preventing FliW from binding to CsrA, so that CsrA can then bind flaA mRNA and represses its translation.</text>
</comment>
<comment type="subunit">
    <text evidence="2">Heteromer of FlaA and FlaB. Interacts with FliW.</text>
</comment>
<comment type="subcellular location">
    <subcellularLocation>
        <location>Secreted</location>
    </subcellularLocation>
    <subcellularLocation>
        <location>Bacterial flagellum</location>
    </subcellularLocation>
</comment>
<comment type="disruption phenotype">
    <text evidence="2">Has 2 short flagella probably composed of flagellin B (flaB).</text>
</comment>
<comment type="miscellaneous">
    <text evidence="2">The mRNA is localized to the poles of short, probably elongating, cells; mRNA localization is lost in an fliW deletion strain but restored in a csrA-fliW double deletion. Correct localization requires protein translation; mutation of the start codon to prevent translation initiation or a premature stop codon (at position 3) prevents mRNA localization, a stop codon at position 101 leads to partial localization to the cell poles.</text>
</comment>
<comment type="similarity">
    <text evidence="3">Belongs to the bacterial flagellin family.</text>
</comment>
<feature type="initiator methionine" description="Removed" evidence="1">
    <location>
        <position position="1"/>
    </location>
</feature>
<feature type="chain" id="PRO_0000182593" description="Flagellin A">
    <location>
        <begin position="2"/>
        <end position="572"/>
    </location>
</feature>
<name>FLA1_CAMJE</name>
<protein>
    <recommendedName>
        <fullName>Flagellin A</fullName>
    </recommendedName>
</protein>